<feature type="chain" id="PRO_0000262582" description="Alpha-adducin">
    <location>
        <begin position="1"/>
        <end position="737"/>
    </location>
</feature>
<feature type="region of interest" description="Disordered" evidence="5">
    <location>
        <begin position="1"/>
        <end position="21"/>
    </location>
</feature>
<feature type="region of interest" description="Disordered" evidence="5">
    <location>
        <begin position="419"/>
        <end position="490"/>
    </location>
</feature>
<feature type="region of interest" description="Disordered" evidence="5">
    <location>
        <begin position="576"/>
        <end position="737"/>
    </location>
</feature>
<feature type="region of interest" description="Interaction with calmodulin" evidence="4">
    <location>
        <begin position="717"/>
        <end position="734"/>
    </location>
</feature>
<feature type="compositionally biased region" description="Polar residues" evidence="5">
    <location>
        <begin position="419"/>
        <end position="430"/>
    </location>
</feature>
<feature type="compositionally biased region" description="Basic and acidic residues" evidence="5">
    <location>
        <begin position="576"/>
        <end position="601"/>
    </location>
</feature>
<feature type="compositionally biased region" description="Pro residues" evidence="5">
    <location>
        <begin position="602"/>
        <end position="614"/>
    </location>
</feature>
<feature type="compositionally biased region" description="Low complexity" evidence="5">
    <location>
        <begin position="687"/>
        <end position="714"/>
    </location>
</feature>
<feature type="compositionally biased region" description="Basic residues" evidence="5">
    <location>
        <begin position="715"/>
        <end position="737"/>
    </location>
</feature>
<feature type="modified residue" description="N-acetylmethionine" evidence="2">
    <location>
        <position position="1"/>
    </location>
</feature>
<feature type="modified residue" description="Phosphoserine" evidence="2">
    <location>
        <position position="12"/>
    </location>
</feature>
<feature type="modified residue" description="Phosphoserine; by PKA" evidence="2">
    <location>
        <position position="59"/>
    </location>
</feature>
<feature type="modified residue" description="Phosphoserine" evidence="2">
    <location>
        <position position="64"/>
    </location>
</feature>
<feature type="modified residue" description="Phosphothreonine" evidence="2">
    <location>
        <position position="331"/>
    </location>
</feature>
<feature type="modified residue" description="Phosphoserine" evidence="2">
    <location>
        <position position="334"/>
    </location>
</feature>
<feature type="modified residue" description="Phosphoserine" evidence="2">
    <location>
        <position position="353"/>
    </location>
</feature>
<feature type="modified residue" description="Phosphoserine" evidence="2">
    <location>
        <position position="355"/>
    </location>
</feature>
<feature type="modified residue" description="Phosphoserine" evidence="2">
    <location>
        <position position="358"/>
    </location>
</feature>
<feature type="modified residue" description="Phosphoserine" evidence="2">
    <location>
        <position position="366"/>
    </location>
</feature>
<feature type="modified residue" description="Phosphoserine; by PKA" evidence="2">
    <location>
        <position position="408"/>
    </location>
</feature>
<feature type="modified residue" description="Phosphoserine" evidence="3">
    <location>
        <position position="427"/>
    </location>
</feature>
<feature type="modified residue" description="Phosphothreonine" evidence="3">
    <location>
        <position position="429"/>
    </location>
</feature>
<feature type="modified residue" description="Phosphoserine" evidence="2">
    <location>
        <position position="431"/>
    </location>
</feature>
<feature type="modified residue" description="Phosphoserine; by PKA" evidence="2">
    <location>
        <position position="436"/>
    </location>
</feature>
<feature type="modified residue" description="Phosphothreonine; by ROCK2" evidence="2">
    <location>
        <position position="445"/>
    </location>
</feature>
<feature type="modified residue" description="Phosphoserine" evidence="3">
    <location>
        <position position="464"/>
    </location>
</feature>
<feature type="modified residue" description="Phosphoserine" evidence="2">
    <location>
        <position position="465"/>
    </location>
</feature>
<feature type="modified residue" description="Phosphothreonine; by ROCK2" evidence="2">
    <location>
        <position position="480"/>
    </location>
</feature>
<feature type="modified residue" description="Phosphoserine; by PKA" evidence="2">
    <location>
        <position position="481"/>
    </location>
</feature>
<feature type="modified residue" description="Phosphoserine" evidence="3">
    <location>
        <position position="586"/>
    </location>
</feature>
<feature type="modified residue" description="Phosphoserine" evidence="3">
    <location>
        <position position="600"/>
    </location>
</feature>
<feature type="modified residue" description="Phosphoserine" evidence="3">
    <location>
        <position position="613"/>
    </location>
</feature>
<feature type="modified residue" description="Phosphothreonine" evidence="3">
    <location>
        <position position="614"/>
    </location>
</feature>
<feature type="modified residue" description="Phosphoserine" evidence="2">
    <location>
        <position position="678"/>
    </location>
</feature>
<feature type="modified residue" description="Phosphoserine" evidence="2">
    <location>
        <position position="707"/>
    </location>
</feature>
<feature type="modified residue" description="Phosphoserine" evidence="2">
    <location>
        <position position="710"/>
    </location>
</feature>
<feature type="modified residue" description="Phosphoserine" evidence="2">
    <location>
        <position position="714"/>
    </location>
</feature>
<feature type="modified residue" description="Phosphoserine; by PKC" evidence="2">
    <location>
        <position position="716"/>
    </location>
</feature>
<feature type="modified residue" description="Phosphoserine; by PKA and PKC" evidence="2">
    <location>
        <position position="726"/>
    </location>
</feature>
<evidence type="ECO:0000250" key="1"/>
<evidence type="ECO:0000250" key="2">
    <source>
        <dbReference type="UniProtKB" id="P35611"/>
    </source>
</evidence>
<evidence type="ECO:0000250" key="3">
    <source>
        <dbReference type="UniProtKB" id="Q9QYC0"/>
    </source>
</evidence>
<evidence type="ECO:0000255" key="4"/>
<evidence type="ECO:0000256" key="5">
    <source>
        <dbReference type="SAM" id="MobiDB-lite"/>
    </source>
</evidence>
<evidence type="ECO:0000305" key="6"/>
<dbReference type="EMBL" id="CR859216">
    <property type="protein sequence ID" value="CAH91400.1"/>
    <property type="molecule type" value="mRNA"/>
</dbReference>
<dbReference type="RefSeq" id="NP_001125824.1">
    <property type="nucleotide sequence ID" value="NM_001132352.1"/>
</dbReference>
<dbReference type="SMR" id="Q5RA10"/>
<dbReference type="FunCoup" id="Q5RA10">
    <property type="interactions" value="2692"/>
</dbReference>
<dbReference type="STRING" id="9601.ENSPPYP00000016255"/>
<dbReference type="GeneID" id="100172752"/>
<dbReference type="KEGG" id="pon:100172752"/>
<dbReference type="CTD" id="118"/>
<dbReference type="eggNOG" id="KOG3699">
    <property type="taxonomic scope" value="Eukaryota"/>
</dbReference>
<dbReference type="InParanoid" id="Q5RA10"/>
<dbReference type="OrthoDB" id="3238794at2759"/>
<dbReference type="Proteomes" id="UP000001595">
    <property type="component" value="Unplaced"/>
</dbReference>
<dbReference type="GO" id="GO:0005912">
    <property type="term" value="C:adherens junction"/>
    <property type="evidence" value="ECO:0007669"/>
    <property type="project" value="TreeGrafter"/>
</dbReference>
<dbReference type="GO" id="GO:0005737">
    <property type="term" value="C:cytoplasm"/>
    <property type="evidence" value="ECO:0007669"/>
    <property type="project" value="UniProtKB-KW"/>
</dbReference>
<dbReference type="GO" id="GO:0005856">
    <property type="term" value="C:cytoskeleton"/>
    <property type="evidence" value="ECO:0007669"/>
    <property type="project" value="UniProtKB-SubCell"/>
</dbReference>
<dbReference type="GO" id="GO:0005925">
    <property type="term" value="C:focal adhesion"/>
    <property type="evidence" value="ECO:0007669"/>
    <property type="project" value="TreeGrafter"/>
</dbReference>
<dbReference type="GO" id="GO:0005886">
    <property type="term" value="C:plasma membrane"/>
    <property type="evidence" value="ECO:0007669"/>
    <property type="project" value="UniProtKB-SubCell"/>
</dbReference>
<dbReference type="GO" id="GO:0014069">
    <property type="term" value="C:postsynaptic density"/>
    <property type="evidence" value="ECO:0007669"/>
    <property type="project" value="TreeGrafter"/>
</dbReference>
<dbReference type="GO" id="GO:0051015">
    <property type="term" value="F:actin filament binding"/>
    <property type="evidence" value="ECO:0007669"/>
    <property type="project" value="TreeGrafter"/>
</dbReference>
<dbReference type="GO" id="GO:0005516">
    <property type="term" value="F:calmodulin binding"/>
    <property type="evidence" value="ECO:0007669"/>
    <property type="project" value="UniProtKB-KW"/>
</dbReference>
<dbReference type="GO" id="GO:0051016">
    <property type="term" value="P:barbed-end actin filament capping"/>
    <property type="evidence" value="ECO:0007669"/>
    <property type="project" value="TreeGrafter"/>
</dbReference>
<dbReference type="GO" id="GO:1903393">
    <property type="term" value="P:positive regulation of adherens junction organization"/>
    <property type="evidence" value="ECO:0007669"/>
    <property type="project" value="TreeGrafter"/>
</dbReference>
<dbReference type="GO" id="GO:1903142">
    <property type="term" value="P:positive regulation of establishment of endothelial barrier"/>
    <property type="evidence" value="ECO:0007669"/>
    <property type="project" value="TreeGrafter"/>
</dbReference>
<dbReference type="FunFam" id="3.40.225.10:FF:000002">
    <property type="entry name" value="alpha-adducin isoform X2"/>
    <property type="match status" value="1"/>
</dbReference>
<dbReference type="Gene3D" id="3.40.225.10">
    <property type="entry name" value="Class II aldolase/adducin N-terminal domain"/>
    <property type="match status" value="1"/>
</dbReference>
<dbReference type="InterPro" id="IPR051017">
    <property type="entry name" value="Aldolase-II_Adducin_sf"/>
</dbReference>
<dbReference type="InterPro" id="IPR001303">
    <property type="entry name" value="Aldolase_II/adducin_N"/>
</dbReference>
<dbReference type="InterPro" id="IPR036409">
    <property type="entry name" value="Aldolase_II/adducin_N_sf"/>
</dbReference>
<dbReference type="NCBIfam" id="NF005451">
    <property type="entry name" value="PRK07044.1"/>
    <property type="match status" value="1"/>
</dbReference>
<dbReference type="PANTHER" id="PTHR10672">
    <property type="entry name" value="ADDUCIN"/>
    <property type="match status" value="1"/>
</dbReference>
<dbReference type="PANTHER" id="PTHR10672:SF4">
    <property type="entry name" value="ALPHA-ADDUCIN"/>
    <property type="match status" value="1"/>
</dbReference>
<dbReference type="Pfam" id="PF00596">
    <property type="entry name" value="Aldolase_II"/>
    <property type="match status" value="1"/>
</dbReference>
<dbReference type="SMART" id="SM01007">
    <property type="entry name" value="Aldolase_II"/>
    <property type="match status" value="1"/>
</dbReference>
<dbReference type="SUPFAM" id="SSF53639">
    <property type="entry name" value="AraD/HMP-PK domain-like"/>
    <property type="match status" value="1"/>
</dbReference>
<comment type="function">
    <text evidence="1">Membrane-cytoskeleton-associated protein that promotes the assembly of the spectrin-actin network. Binds to calmodulin (By similarity).</text>
</comment>
<comment type="subunit">
    <text>Heterodimer of an alpha and a beta subunit or an alpha and a gamma subunit.</text>
</comment>
<comment type="subcellular location">
    <subcellularLocation>
        <location>Cytoplasm</location>
        <location>Cytoskeleton</location>
    </subcellularLocation>
    <subcellularLocation>
        <location>Cell membrane</location>
        <topology>Peripheral membrane protein</topology>
        <orientation>Cytoplasmic side</orientation>
    </subcellularLocation>
</comment>
<comment type="domain">
    <text evidence="1">Each subunit is comprised of three regions: a NH2-terminal protease-resistant globular head region, a short connecting subdomain, and a protease-sensitive tail region.</text>
</comment>
<comment type="similarity">
    <text evidence="6">Belongs to the aldolase class II family. Adducin subfamily.</text>
</comment>
<proteinExistence type="evidence at transcript level"/>
<reference key="1">
    <citation type="submission" date="2004-11" db="EMBL/GenBank/DDBJ databases">
        <authorList>
            <consortium name="The German cDNA consortium"/>
        </authorList>
    </citation>
    <scope>NUCLEOTIDE SEQUENCE [LARGE SCALE MRNA]</scope>
    <source>
        <tissue>Brain cortex</tissue>
    </source>
</reference>
<accession>Q5RA10</accession>
<organism>
    <name type="scientific">Pongo abelii</name>
    <name type="common">Sumatran orangutan</name>
    <name type="synonym">Pongo pygmaeus abelii</name>
    <dbReference type="NCBI Taxonomy" id="9601"/>
    <lineage>
        <taxon>Eukaryota</taxon>
        <taxon>Metazoa</taxon>
        <taxon>Chordata</taxon>
        <taxon>Craniata</taxon>
        <taxon>Vertebrata</taxon>
        <taxon>Euteleostomi</taxon>
        <taxon>Mammalia</taxon>
        <taxon>Eutheria</taxon>
        <taxon>Euarchontoglires</taxon>
        <taxon>Primates</taxon>
        <taxon>Haplorrhini</taxon>
        <taxon>Catarrhini</taxon>
        <taxon>Hominidae</taxon>
        <taxon>Pongo</taxon>
    </lineage>
</organism>
<protein>
    <recommendedName>
        <fullName>Alpha-adducin</fullName>
    </recommendedName>
    <alternativeName>
        <fullName>Erythrocyte adducin subunit alpha</fullName>
    </alternativeName>
</protein>
<name>ADDA_PONAB</name>
<gene>
    <name type="primary">ADD1</name>
</gene>
<keyword id="KW-0007">Acetylation</keyword>
<keyword id="KW-0009">Actin-binding</keyword>
<keyword id="KW-0112">Calmodulin-binding</keyword>
<keyword id="KW-1003">Cell membrane</keyword>
<keyword id="KW-0963">Cytoplasm</keyword>
<keyword id="KW-0206">Cytoskeleton</keyword>
<keyword id="KW-0472">Membrane</keyword>
<keyword id="KW-0597">Phosphoprotein</keyword>
<keyword id="KW-1185">Reference proteome</keyword>
<sequence length="737" mass="80969">MNGDSRAAVVTSPPPTTAPHKERYFDRVDENNPEYLRERNMAPDLRQDFNMMEQKKRVSMILQSPAFCEELESMIQEQFKKGKNPTGLLALQQIADFMTTNVPNVYPAAPQGGMAALNMSLGMVTPVNDLRGSDSIAYDKGEKLLRCKLAAFYRLADLFGWSQLIYNHITTRVNSEQEHFLIVPFGLLYSEVTASSLVKINLQGDIVDRGSTNLGVNQAGFTLHSAIYAARPDVKCVVHIHTPAGAAVSAMKCGLLPISPEALSLGEVAYHDYHGILVDEEEKVLIQKNLGPKSKVLILRNHGLVSVGESVEEAFYYIHNLVVACEIQARTLASAGGPDNLVLLNPEKYKAKSRSPGSPVGEGTGSPPKWQIGEQEFEALMRMLDNLGYRTGYPYRYPALREKSKKYSDVEVPASVTGYSFTSDGDSGTCSPLRHSFQKQQREKTRWLNSGRGDEASEEGQNGSSPKSKTKWTKEDGHRTSTSAVPNLFVPLNTNPKEVQEMRNKIREQNLQDIKTAGPQSQVLCGVVMDRSLVQGELVTASKAIIEKEYQPHVIVSTTGPNPFTTLTDRELEEYRREVERKQKGSEENLDEAREQKEKSPPDQPAVPYPPPSTPIKLEEDLVPEPTTGDDSDAATFKPTLPDLSPDEPSEALGFPMLEKEEEAHRPPSPTEAPTEASPEPAPDPAPVAEEAAPSAAEEGAAADPGSDGSPGKSPSKKKKKFRTPSFLKKSKKKSES</sequence>